<reference key="1">
    <citation type="journal article" date="2001" name="Genome Res.">
        <title>The complete genome sequence of the lactic acid bacterium Lactococcus lactis ssp. lactis IL1403.</title>
        <authorList>
            <person name="Bolotin A."/>
            <person name="Wincker P."/>
            <person name="Mauger S."/>
            <person name="Jaillon O."/>
            <person name="Malarme K."/>
            <person name="Weissenbach J."/>
            <person name="Ehrlich S.D."/>
            <person name="Sorokin A."/>
        </authorList>
    </citation>
    <scope>NUCLEOTIDE SEQUENCE [LARGE SCALE GENOMIC DNA]</scope>
    <source>
        <strain>IL1403</strain>
    </source>
</reference>
<protein>
    <recommendedName>
        <fullName evidence="1">Adapter protein MecA</fullName>
    </recommendedName>
</protein>
<proteinExistence type="inferred from homology"/>
<comment type="function">
    <text evidence="1">Enables the recognition and targeting of unfolded and aggregated proteins to the ClpC protease or to other proteins involved in proteolysis.</text>
</comment>
<comment type="subunit">
    <text evidence="1">Homodimer.</text>
</comment>
<comment type="domain">
    <text>The N-terminal domain probably binds unfolded/aggregated proteins; the C-terminal domain interacts with ClpC.</text>
</comment>
<comment type="similarity">
    <text evidence="1">Belongs to the MecA family.</text>
</comment>
<evidence type="ECO:0000255" key="1">
    <source>
        <dbReference type="HAMAP-Rule" id="MF_01124"/>
    </source>
</evidence>
<keyword id="KW-1185">Reference proteome</keyword>
<gene>
    <name evidence="1" type="primary">mecA</name>
    <name type="ordered locus">LL1795</name>
    <name type="ORF">L37085</name>
</gene>
<feature type="chain" id="PRO_0000212270" description="Adapter protein MecA">
    <location>
        <begin position="1"/>
        <end position="233"/>
    </location>
</feature>
<sequence length="233" mass="27077">MKYEDINENTIKITLSFDDLTDYDIKLSDFFGNQEVIEQFFYELVDELGLENRFGNVGMLTFQIQPFPQGVHMIVHEEAMLGEGGEIPDDPEEFEELMTGFYNKLNEIGADMARERGITDFKPGLGLPGTKKDEAEQEPDFIYYSIRYEDIMSVLTGIKNVKFADEESEFYRYDGNFYLVVLDNQKEKGKMHVESTRSRMMEYGEATKMSREFLQEYGECLIATRALDVLRKI</sequence>
<accession>Q9CEP1</accession>
<name>MECA_LACLA</name>
<dbReference type="EMBL" id="AE005176">
    <property type="protein sequence ID" value="AAK05893.1"/>
    <property type="molecule type" value="Genomic_DNA"/>
</dbReference>
<dbReference type="PIR" id="C86849">
    <property type="entry name" value="C86849"/>
</dbReference>
<dbReference type="RefSeq" id="NP_267952.1">
    <property type="nucleotide sequence ID" value="NC_002662.1"/>
</dbReference>
<dbReference type="RefSeq" id="WP_004255173.1">
    <property type="nucleotide sequence ID" value="NC_002662.1"/>
</dbReference>
<dbReference type="SMR" id="Q9CEP1"/>
<dbReference type="PaxDb" id="272623-L37085"/>
<dbReference type="EnsemblBacteria" id="AAK05893">
    <property type="protein sequence ID" value="AAK05893"/>
    <property type="gene ID" value="L37085"/>
</dbReference>
<dbReference type="KEGG" id="lla:L37085"/>
<dbReference type="PATRIC" id="fig|272623.7.peg.1922"/>
<dbReference type="eggNOG" id="COG4862">
    <property type="taxonomic scope" value="Bacteria"/>
</dbReference>
<dbReference type="HOGENOM" id="CLU_071496_2_1_9"/>
<dbReference type="OrthoDB" id="2360201at2"/>
<dbReference type="Proteomes" id="UP000002196">
    <property type="component" value="Chromosome"/>
</dbReference>
<dbReference type="GO" id="GO:0030674">
    <property type="term" value="F:protein-macromolecule adaptor activity"/>
    <property type="evidence" value="ECO:0007669"/>
    <property type="project" value="UniProtKB-UniRule"/>
</dbReference>
<dbReference type="Gene3D" id="3.30.70.1950">
    <property type="match status" value="1"/>
</dbReference>
<dbReference type="HAMAP" id="MF_01124">
    <property type="entry name" value="MecA"/>
    <property type="match status" value="1"/>
</dbReference>
<dbReference type="InterPro" id="IPR038471">
    <property type="entry name" value="MecA_C_sf"/>
</dbReference>
<dbReference type="InterPro" id="IPR008681">
    <property type="entry name" value="Neg-reg_MecA"/>
</dbReference>
<dbReference type="PANTHER" id="PTHR39161">
    <property type="entry name" value="ADAPTER PROTEIN MECA"/>
    <property type="match status" value="1"/>
</dbReference>
<dbReference type="PANTHER" id="PTHR39161:SF1">
    <property type="entry name" value="ADAPTER PROTEIN MECA 1"/>
    <property type="match status" value="1"/>
</dbReference>
<dbReference type="Pfam" id="PF05389">
    <property type="entry name" value="MecA"/>
    <property type="match status" value="1"/>
</dbReference>
<dbReference type="PIRSF" id="PIRSF029008">
    <property type="entry name" value="MecA"/>
    <property type="match status" value="1"/>
</dbReference>
<organism>
    <name type="scientific">Lactococcus lactis subsp. lactis (strain IL1403)</name>
    <name type="common">Streptococcus lactis</name>
    <dbReference type="NCBI Taxonomy" id="272623"/>
    <lineage>
        <taxon>Bacteria</taxon>
        <taxon>Bacillati</taxon>
        <taxon>Bacillota</taxon>
        <taxon>Bacilli</taxon>
        <taxon>Lactobacillales</taxon>
        <taxon>Streptococcaceae</taxon>
        <taxon>Lactococcus</taxon>
    </lineage>
</organism>